<gene>
    <name type="primary">Avh238</name>
    <name type="ORF">PHYSODRAFT_285342</name>
</gene>
<sequence length="134" mass="14074">MRGVFFVAVAVAIFARSSAEAKLLSEAAPGLAADAVISGESRERFLRVADPEDDDLAAPADDGKTEERAPKFKSLNEIHKKLDEEDMVHVSKILGNMGAIHADNIAKARAALKAAHESGATTANQLVAGLAKPV</sequence>
<evidence type="ECO:0000255" key="1"/>
<evidence type="ECO:0000256" key="2">
    <source>
        <dbReference type="SAM" id="MobiDB-lite"/>
    </source>
</evidence>
<evidence type="ECO:0000269" key="3">
    <source>
    </source>
</evidence>
<evidence type="ECO:0000269" key="4">
    <source>
    </source>
</evidence>
<evidence type="ECO:0000269" key="5">
    <source>
    </source>
</evidence>
<evidence type="ECO:0000303" key="6">
    <source>
    </source>
</evidence>
<evidence type="ECO:0000305" key="7"/>
<evidence type="ECO:0000305" key="8">
    <source>
    </source>
</evidence>
<accession>G4ZBI3</accession>
<feature type="signal peptide" evidence="1">
    <location>
        <begin position="1"/>
        <end position="21"/>
    </location>
</feature>
<feature type="chain" id="PRO_5003472039" description="RxLR effector protein Avh238">
    <location>
        <begin position="22"/>
        <end position="134"/>
    </location>
</feature>
<feature type="region of interest" description="Disordered" evidence="2">
    <location>
        <begin position="49"/>
        <end position="70"/>
    </location>
</feature>
<feature type="short sequence motif" description="RxLR-dEER" evidence="8">
    <location>
        <begin position="44"/>
        <end position="68"/>
    </location>
</feature>
<feature type="compositionally biased region" description="Basic and acidic residues" evidence="2">
    <location>
        <begin position="61"/>
        <end position="70"/>
    </location>
</feature>
<feature type="mutagenesis site" description="Leads to the loss of the cell death-inducing activity." evidence="4">
    <original>H</original>
    <variation>N</variation>
    <location>
        <position position="79"/>
    </location>
</feature>
<proteinExistence type="evidence at protein level"/>
<protein>
    <recommendedName>
        <fullName evidence="6">RxLR effector protein Avh238</fullName>
    </recommendedName>
    <alternativeName>
        <fullName evidence="6">Avirulence homolog protein 238</fullName>
    </alternativeName>
</protein>
<dbReference type="EMBL" id="JH159153">
    <property type="protein sequence ID" value="EGZ19905.1"/>
    <property type="molecule type" value="Genomic_DNA"/>
</dbReference>
<dbReference type="RefSeq" id="XP_009522622.1">
    <property type="nucleotide sequence ID" value="XM_009524327.1"/>
</dbReference>
<dbReference type="SMR" id="G4ZBI3"/>
<dbReference type="STRING" id="1094619.G4ZBI3"/>
<dbReference type="EnsemblProtists" id="EGZ19905">
    <property type="protein sequence ID" value="EGZ19905"/>
    <property type="gene ID" value="PHYSODRAFT_285342"/>
</dbReference>
<dbReference type="GeneID" id="20640018"/>
<dbReference type="KEGG" id="psoj:PHYSODRAFT_285342"/>
<dbReference type="InParanoid" id="G4ZBI3"/>
<dbReference type="OMA" id="MGAIHAD"/>
<dbReference type="Proteomes" id="UP000002640">
    <property type="component" value="Unassembled WGS sequence"/>
</dbReference>
<dbReference type="GO" id="GO:0005576">
    <property type="term" value="C:extracellular region"/>
    <property type="evidence" value="ECO:0007669"/>
    <property type="project" value="UniProtKB-SubCell"/>
</dbReference>
<dbReference type="GO" id="GO:0030430">
    <property type="term" value="C:host cell cytoplasm"/>
    <property type="evidence" value="ECO:0007669"/>
    <property type="project" value="UniProtKB-SubCell"/>
</dbReference>
<dbReference type="GO" id="GO:0042025">
    <property type="term" value="C:host cell nucleus"/>
    <property type="evidence" value="ECO:0007669"/>
    <property type="project" value="UniProtKB-SubCell"/>
</dbReference>
<keyword id="KW-1035">Host cytoplasm</keyword>
<keyword id="KW-1048">Host nucleus</keyword>
<keyword id="KW-1185">Reference proteome</keyword>
<keyword id="KW-0964">Secreted</keyword>
<keyword id="KW-0732">Signal</keyword>
<keyword id="KW-0843">Virulence</keyword>
<organism>
    <name type="scientific">Phytophthora sojae (strain P6497)</name>
    <name type="common">Soybean stem and root rot agent</name>
    <name type="synonym">Phytophthora megasperma f. sp. glycines</name>
    <dbReference type="NCBI Taxonomy" id="1094619"/>
    <lineage>
        <taxon>Eukaryota</taxon>
        <taxon>Sar</taxon>
        <taxon>Stramenopiles</taxon>
        <taxon>Oomycota</taxon>
        <taxon>Peronosporales</taxon>
        <taxon>Peronosporaceae</taxon>
        <taxon>Phytophthora</taxon>
    </lineage>
</organism>
<comment type="function">
    <text evidence="3 4 5">Effector that suppresses plant defense responses during the early stages of pathogen infection. Suppresses cell death induced by effectors and PAMPs in plant hosts (PubMed:21653195). Is able to induced cell death in tomato, tobacco, eggplant, and potato, but not in A.thaliana (PubMed:28134441). Interacts with and destabilizes host 1-aminocyclopropane-1-carboxylate synthases. By suppressing type2 ACS-catalyzed ethylene biosynthesis, Avh238 facilitates Phytophthora infection (PubMed:30394556).</text>
</comment>
<comment type="subunit">
    <text evidence="5">Interacts with host 1-aminocyclopropane-1-carboxylate synthases ACS1, ACS2, ACS3, ACS10 and ACS12.</text>
</comment>
<comment type="subcellular location">
    <subcellularLocation>
        <location evidence="4 5">Secreted</location>
    </subcellularLocation>
    <subcellularLocation>
        <location evidence="4 5">Host cytoplasm</location>
    </subcellularLocation>
    <subcellularLocation>
        <location evidence="4">Host nucleus</location>
    </subcellularLocation>
    <text evidence="4">Avh238-triggered cell death requires nuclear localization whereas cytoplasmic localization of Avh238 is required for the suppression of INF1-induced cell death.</text>
</comment>
<comment type="induction">
    <text evidence="3">Expression is strongly up-regulated during the early stages of infection.</text>
</comment>
<comment type="domain">
    <text evidence="8">The RxLR-dEER motif acts to carry the protein into the host cell cytoplasm through binding to cell surface phosphatidylinositol-3-phosphate.</text>
</comment>
<comment type="disruption phenotype">
    <text evidence="5">Inhibits ethylene induction and promotes P.sojae infection in soybean.</text>
</comment>
<comment type="miscellaneous">
    <text evidence="4">Avh238 is highly polymorphic among P.sojae isolates.</text>
</comment>
<comment type="similarity">
    <text evidence="7">Belongs to the RxLR effector family.</text>
</comment>
<reference key="1">
    <citation type="journal article" date="2006" name="Science">
        <title>Phytophthora genome sequences uncover evolutionary origins and mechanisms of pathogenesis.</title>
        <authorList>
            <person name="Tyler B.M."/>
            <person name="Tripathy S."/>
            <person name="Zhang X."/>
            <person name="Dehal P."/>
            <person name="Jiang R.H.Y."/>
            <person name="Aerts A."/>
            <person name="Arredondo F.D."/>
            <person name="Baxter L."/>
            <person name="Bensasson D."/>
            <person name="Beynon J.L."/>
            <person name="Chapman J."/>
            <person name="Damasceno C.M.B."/>
            <person name="Dorrance A.E."/>
            <person name="Dou D."/>
            <person name="Dickerman A.W."/>
            <person name="Dubchak I.L."/>
            <person name="Garbelotto M."/>
            <person name="Gijzen M."/>
            <person name="Gordon S.G."/>
            <person name="Govers F."/>
            <person name="Grunwald N.J."/>
            <person name="Huang W."/>
            <person name="Ivors K.L."/>
            <person name="Jones R.W."/>
            <person name="Kamoun S."/>
            <person name="Krampis K."/>
            <person name="Lamour K.H."/>
            <person name="Lee M.-K."/>
            <person name="McDonald W.H."/>
            <person name="Medina M."/>
            <person name="Meijer H.J.G."/>
            <person name="Nordberg E.K."/>
            <person name="Maclean D.J."/>
            <person name="Ospina-Giraldo M.D."/>
            <person name="Morris P.F."/>
            <person name="Phuntumart V."/>
            <person name="Putnam N.H."/>
            <person name="Rash S."/>
            <person name="Rose J.K.C."/>
            <person name="Sakihama Y."/>
            <person name="Salamov A.A."/>
            <person name="Savidor A."/>
            <person name="Scheuring C.F."/>
            <person name="Smith B.M."/>
            <person name="Sobral B.W.S."/>
            <person name="Terry A."/>
            <person name="Torto-Alalibo T.A."/>
            <person name="Win J."/>
            <person name="Xu Z."/>
            <person name="Zhang H."/>
            <person name="Grigoriev I.V."/>
            <person name="Rokhsar D.S."/>
            <person name="Boore J.L."/>
        </authorList>
    </citation>
    <scope>NUCLEOTIDE SEQUENCE [LARGE SCALE GENOMIC DNA]</scope>
    <source>
        <strain>P6497</strain>
    </source>
</reference>
<reference key="2">
    <citation type="journal article" date="2011" name="Plant Cell">
        <title>Transcriptional programming and functional interactions within the Phytophthora sojae RXLR effector repertoire.</title>
        <authorList>
            <person name="Wang Q."/>
            <person name="Han C."/>
            <person name="Ferreira A.O."/>
            <person name="Yu X."/>
            <person name="Ye W."/>
            <person name="Tripathy S."/>
            <person name="Kale S.D."/>
            <person name="Gu B."/>
            <person name="Sheng Y."/>
            <person name="Sui Y."/>
            <person name="Wang X."/>
            <person name="Zhang Z."/>
            <person name="Cheng B."/>
            <person name="Dong S."/>
            <person name="Shan W."/>
            <person name="Zheng X."/>
            <person name="Dou D."/>
            <person name="Tyler B.M."/>
            <person name="Wang Y."/>
        </authorList>
    </citation>
    <scope>IDENTIFICATION</scope>
    <scope>FUNCTION</scope>
    <scope>INDUCTION</scope>
    <scope>DOMAIN</scope>
</reference>
<reference key="3">
    <citation type="journal article" date="2017" name="New Phytol.">
        <title>Distinct regions of the Phytophthora essential effector Avh238 determine its function in cell death activation and plant immunity suppression.</title>
        <authorList>
            <person name="Yang B."/>
            <person name="Wang Q."/>
            <person name="Jing M."/>
            <person name="Guo B."/>
            <person name="Wu J."/>
            <person name="Wang H."/>
            <person name="Wang Y."/>
            <person name="Lin L."/>
            <person name="Wang Y."/>
            <person name="Ye W."/>
            <person name="Dong S."/>
            <person name="Wang Y."/>
        </authorList>
    </citation>
    <scope>FUNCTION</scope>
    <scope>SUBCELLULAR LOCATION</scope>
    <scope>DOMAIN</scope>
    <scope>MUTAGENESIS OF HIS-79</scope>
</reference>
<reference key="4">
    <citation type="journal article" date="2019" name="New Phytol.">
        <title>The Phytophthora sojae RXLR effector Avh238 destabilizes soybean type2 GmACSs to suppress ethylene biosynthesis and promote infection.</title>
        <authorList>
            <person name="Yang B."/>
            <person name="Wang Y."/>
            <person name="Guo B."/>
            <person name="Jing M."/>
            <person name="Zhou H."/>
            <person name="Li Y."/>
            <person name="Wang H."/>
            <person name="Huang J."/>
            <person name="Wang Y."/>
            <person name="Ye W."/>
            <person name="Dong S."/>
            <person name="Wang Y."/>
        </authorList>
    </citation>
    <scope>FUNCTION</scope>
    <scope>INTERACTION WITH HOST ACS1; ACS2; ACS3; ACS10 AND ACS12</scope>
    <scope>DISRUPTION PHENOTYPE</scope>
    <scope>SUBCELLULAR LOCATION</scope>
</reference>
<name>AV238_PHYSP</name>